<accession>P13202</accession>
<accession>Q7M6S4</accession>
<feature type="chain" id="PRO_0000115355" description="Immediate early protein IE1">
    <location>
        <begin position="1"/>
        <end position="491"/>
    </location>
</feature>
<feature type="region of interest" description="Disordered" evidence="3">
    <location>
        <begin position="1"/>
        <end position="30"/>
    </location>
</feature>
<feature type="region of interest" description="Nuclear localization signal" evidence="2">
    <location>
        <begin position="1"/>
        <end position="24"/>
    </location>
</feature>
<feature type="region of interest" description="Interaction with host PML, interference with PML sumoylation and disruption of PML-associated nuclear bodies" evidence="2">
    <location>
        <begin position="132"/>
        <end position="346"/>
    </location>
</feature>
<feature type="region of interest" description="Interaction with host STAT2" evidence="2">
    <location>
        <begin position="373"/>
        <end position="445"/>
    </location>
</feature>
<feature type="region of interest" description="Interaction with host STAT3" evidence="2">
    <location>
        <begin position="410"/>
        <end position="445"/>
    </location>
</feature>
<feature type="region of interest" description="Modulation of STAT3/STAT1 signaling" evidence="2">
    <location>
        <begin position="410"/>
        <end position="420"/>
    </location>
</feature>
<feature type="region of interest" description="Disordered" evidence="3">
    <location>
        <begin position="421"/>
        <end position="491"/>
    </location>
</feature>
<feature type="region of interest" description="Acidic" evidence="2">
    <location>
        <begin position="421"/>
        <end position="472"/>
    </location>
</feature>
<feature type="region of interest" description="Interaction with host SUMO1" evidence="2">
    <location>
        <begin position="449"/>
        <end position="452"/>
    </location>
</feature>
<feature type="region of interest" description="Chromosome-tethering domain (CTD), binding to histones" evidence="2">
    <location>
        <begin position="475"/>
        <end position="491"/>
    </location>
</feature>
<feature type="compositionally biased region" description="Basic and acidic residues" evidence="3">
    <location>
        <begin position="1"/>
        <end position="11"/>
    </location>
</feature>
<feature type="compositionally biased region" description="Acidic residues" evidence="3">
    <location>
        <begin position="423"/>
        <end position="444"/>
    </location>
</feature>
<feature type="compositionally biased region" description="Acidic residues" evidence="3">
    <location>
        <begin position="455"/>
        <end position="470"/>
    </location>
</feature>
<feature type="cross-link" description="Glycyl lysine isopeptide (Lys-Gly) (interchain with G-Cter in SUMO)" evidence="1">
    <location>
        <position position="450"/>
    </location>
</feature>
<feature type="mutagenesis site" description="Enhanced degradation of IE1 during infection; complete loss of interference with PML sumoylation, disruption of PML-associated nuclear bodies and transactivation activity." evidence="5">
    <original>L</original>
    <variation>P</variation>
    <location>
        <position position="174"/>
    </location>
</feature>
<feature type="helix" evidence="14">
    <location>
        <begin position="28"/>
        <end position="47"/>
    </location>
</feature>
<feature type="strand" evidence="14">
    <location>
        <begin position="50"/>
        <end position="52"/>
    </location>
</feature>
<feature type="helix" evidence="14">
    <location>
        <begin position="56"/>
        <end position="58"/>
    </location>
</feature>
<feature type="helix" evidence="14">
    <location>
        <begin position="66"/>
        <end position="75"/>
    </location>
</feature>
<feature type="helix" evidence="14">
    <location>
        <begin position="81"/>
        <end position="136"/>
    </location>
</feature>
<feature type="helix" evidence="14">
    <location>
        <begin position="138"/>
        <end position="143"/>
    </location>
</feature>
<feature type="helix" evidence="14">
    <location>
        <begin position="144"/>
        <end position="154"/>
    </location>
</feature>
<feature type="helix" evidence="14">
    <location>
        <begin position="161"/>
        <end position="163"/>
    </location>
</feature>
<feature type="helix" evidence="14">
    <location>
        <begin position="164"/>
        <end position="218"/>
    </location>
</feature>
<feature type="helix" evidence="14">
    <location>
        <begin position="226"/>
        <end position="237"/>
    </location>
</feature>
<feature type="helix" evidence="14">
    <location>
        <begin position="238"/>
        <end position="240"/>
    </location>
</feature>
<feature type="helix" evidence="14">
    <location>
        <begin position="243"/>
        <end position="262"/>
    </location>
</feature>
<feature type="helix" evidence="14">
    <location>
        <begin position="264"/>
        <end position="326"/>
    </location>
</feature>
<feature type="helix" evidence="14">
    <location>
        <begin position="332"/>
        <end position="354"/>
    </location>
</feature>
<feature type="helix" evidence="14">
    <location>
        <begin position="368"/>
        <end position="381"/>
    </location>
</feature>
<name>VIE1_HCMVA</name>
<sequence length="491" mass="55110">MESSAKRKMDPDNPDEGPSSKVPRPETPVTKATTFLQTMLRKEVNSQLSLGDPLFPELAEESLKTFEQVTEDCNENPEKDVLAELVKQIKVRVDMVRHRIKEHMLKKYTQTEEKFTGAFNMMGGCLQNALDILDKVHEPFEEMKCIGLTMQSMYENYIVPEDKREMWMACIKELHDVSKGAANKLGGALQAKARAKKDELRRKMMYMCYRNIEFFTKNSAFPKTTNGCSQAMAALQNLPQCSPDEIMAYAQKIFKILDEERDKVLTHIDHIFMDILTTCVETMCNEYKVTSDACMMTMYGGISLLSEFCRVLCCYVLEETSVMLAKRPLITKPEVISVMKRRIEEICMKVFAQYILGADPLRVCSPSVDDLRAIAEESDEEEAIVAYTLATAGVSSSDSLVSPPESPVPATIPLSSVIVAENSDQEESEQSDEEEEEGAQEEREDTVSVKSEPVSEIEEVAPEEEEDGAEEPTASGGKSTHPMVTRSKADQ</sequence>
<evidence type="ECO:0000250" key="1"/>
<evidence type="ECO:0000250" key="2">
    <source>
        <dbReference type="UniProtKB" id="P03169"/>
    </source>
</evidence>
<evidence type="ECO:0000256" key="3">
    <source>
        <dbReference type="SAM" id="MobiDB-lite"/>
    </source>
</evidence>
<evidence type="ECO:0000269" key="4">
    <source>
    </source>
</evidence>
<evidence type="ECO:0000269" key="5">
    <source>
    </source>
</evidence>
<evidence type="ECO:0000269" key="6">
    <source>
    </source>
</evidence>
<evidence type="ECO:0000269" key="7">
    <source>
    </source>
</evidence>
<evidence type="ECO:0000269" key="8">
    <source>
    </source>
</evidence>
<evidence type="ECO:0000269" key="9">
    <source>
    </source>
</evidence>
<evidence type="ECO:0000303" key="10">
    <source>
    </source>
</evidence>
<evidence type="ECO:0000305" key="11"/>
<evidence type="ECO:0000305" key="12">
    <source>
    </source>
</evidence>
<evidence type="ECO:0007744" key="13">
    <source>
        <dbReference type="PDB" id="6TGZ"/>
    </source>
</evidence>
<evidence type="ECO:0007829" key="14">
    <source>
        <dbReference type="PDB" id="6TGZ"/>
    </source>
</evidence>
<protein>
    <recommendedName>
        <fullName>Immediate early protein IE1</fullName>
        <shortName>IE1</shortName>
    </recommendedName>
    <alternativeName>
        <fullName>55 kDa immediate-early protein 1</fullName>
    </alternativeName>
    <alternativeName>
        <fullName evidence="10">IE1p72</fullName>
    </alternativeName>
    <alternativeName>
        <fullName evidence="2">IE72</fullName>
    </alternativeName>
</protein>
<organism>
    <name type="scientific">Human cytomegalovirus (strain AD169)</name>
    <name type="common">HHV-5</name>
    <name type="synonym">Human herpesvirus 5</name>
    <dbReference type="NCBI Taxonomy" id="10360"/>
    <lineage>
        <taxon>Viruses</taxon>
        <taxon>Duplodnaviria</taxon>
        <taxon>Heunggongvirae</taxon>
        <taxon>Peploviricota</taxon>
        <taxon>Herviviricetes</taxon>
        <taxon>Herpesvirales</taxon>
        <taxon>Orthoherpesviridae</taxon>
        <taxon>Betaherpesvirinae</taxon>
        <taxon>Cytomegalovirus</taxon>
        <taxon>Cytomegalovirus humanbeta5</taxon>
        <taxon>Human cytomegalovirus</taxon>
    </lineage>
</organism>
<reference key="1">
    <citation type="journal article" date="1985" name="Virus Res.">
        <title>The structure of the major immediate early gene of human cytomegalovirus strain AD169.</title>
        <authorList>
            <person name="Akrigg A."/>
            <person name="Wilkinson G.W.G."/>
            <person name="Oram J.D."/>
        </authorList>
    </citation>
    <scope>NUCLEOTIDE SEQUENCE [GENOMIC DNA]</scope>
</reference>
<reference key="2">
    <citation type="journal article" date="1990" name="Curr. Top. Microbiol. Immunol.">
        <title>Analysis of the protein-coding content of the sequence of human cytomegalovirus strain AD169.</title>
        <authorList>
            <person name="Chee M.S."/>
            <person name="Bankier A.T."/>
            <person name="Beck S."/>
            <person name="Bohni R."/>
            <person name="Brown C.M."/>
            <person name="Cerny R."/>
            <person name="Horsnell T."/>
            <person name="Hutchison C.A. III"/>
            <person name="Kouzarides T."/>
            <person name="Martignetti J.A."/>
            <person name="Preddie E."/>
            <person name="Satchwell S.C."/>
            <person name="Tomlinson P."/>
            <person name="Weston K.M."/>
            <person name="Barrell B.G."/>
        </authorList>
    </citation>
    <scope>NUCLEOTIDE SEQUENCE [LARGE SCALE GENOMIC DNA]</scope>
</reference>
<reference key="3">
    <citation type="journal article" date="2003" name="J. Gen. Virol.">
        <title>The human cytomegalovirus genome revisited: comparison with the chimpanzee cytomegalovirus genome.</title>
        <authorList>
            <person name="Davison A.J."/>
            <person name="Dolan A."/>
            <person name="Akter P."/>
            <person name="Addison C."/>
            <person name="Dargan D.J."/>
            <person name="Alcendor D.J."/>
            <person name="McGeoch D.J."/>
            <person name="Hayward G.S."/>
        </authorList>
    </citation>
    <scope>GENOME REANNOTATION</scope>
</reference>
<reference key="4">
    <citation type="journal article" date="2003" name="J. Gen. Virol.">
        <authorList>
            <person name="Davison A.J."/>
            <person name="Dolan A."/>
            <person name="Akter P."/>
            <person name="Addison C."/>
            <person name="Dargan D.J."/>
            <person name="Alcendor D.J."/>
            <person name="McGeoch D.J."/>
            <person name="Hayward G.S."/>
        </authorList>
    </citation>
    <scope>ERRATUM OF PUBMED:12533697</scope>
</reference>
<reference key="5">
    <citation type="journal article" date="2013" name="J. Virol.">
        <title>Human cytomegalovirus IE1 protein disrupts interleukin-6 signaling by sequestering STAT3 in the nucleus.</title>
        <authorList>
            <person name="Reitsma J.M."/>
            <person name="Sato H."/>
            <person name="Nevels M."/>
            <person name="Terhune S.S."/>
            <person name="Paulus C."/>
        </authorList>
    </citation>
    <scope>FUNCTION</scope>
</reference>
<reference key="6">
    <citation type="journal article" date="2016" name="J. Virol.">
        <title>Multiple Transcripts Encode Full-Length Human Cytomegalovirus IE1 and IE2 Proteins during Lytic Infection.</title>
        <authorList>
            <person name="Arend K.C."/>
            <person name="Ziehr B."/>
            <person name="Vincent H.A."/>
            <person name="Moorman N.J."/>
        </authorList>
    </citation>
    <scope>FUNCTION</scope>
</reference>
<reference key="7">
    <citation type="journal article" date="2017" name="J. Virol.">
        <title>The ND10 Component Promyelocytic Leukemia Protein Acts as an E3 Ligase for SUMOylation of the Major Immediate Early Protein IE1 of Human Cytomegalovirus.</title>
        <authorList>
            <person name="Reuter N."/>
            <person name="Schilling E.M."/>
            <person name="Scherer M."/>
            <person name="Mueller R."/>
            <person name="Stamminger T."/>
        </authorList>
    </citation>
    <scope>SUMOYLATION BY HOST PML</scope>
</reference>
<reference key="8">
    <citation type="journal article" date="2017" name="J. Virol.">
        <title>The Human Cytomegalovirus IE1 Protein Antagonizes PML Nuclear Body-Mediated Intrinsic Immunity via the Inhibition of PML De Novo SUMOylation.</title>
        <authorList>
            <person name="Schilling E.M."/>
            <person name="Scherer M."/>
            <person name="Reuter N."/>
            <person name="Schweininger J."/>
            <person name="Muller Y.A."/>
            <person name="Stamminger T."/>
        </authorList>
    </citation>
    <scope>FUNCTION</scope>
    <scope>INTERACTION WITH HOST PML</scope>
</reference>
<reference key="9">
    <citation type="journal article" date="2016" name="J. Virol.">
        <title>Characterization of Recombinant Human Cytomegaloviruses Encoding IE1 Mutants L174P and 1-382 Reveals that Viral Targeting of PML Bodies Perturbs both Intrinsic and Innate Immune Responses.</title>
        <authorList>
            <person name="Scherer M."/>
            <person name="Otto V."/>
            <person name="Stump J.D."/>
            <person name="Klingl S."/>
            <person name="Mueller R."/>
            <person name="Reuter N."/>
            <person name="Muller Y.A."/>
            <person name="Sticht H."/>
            <person name="Stamminger T."/>
        </authorList>
    </citation>
    <scope>MUTAGENESIS OF LEU-174</scope>
    <scope>FUNCTION</scope>
</reference>
<reference evidence="13" key="10">
    <citation type="journal article" date="2021" name="PLoS Pathog.">
        <title>Cytomegalovirus immediate-early 1 proteins form a structurally distinct protein class with adaptations determining cross-species barriers.</title>
        <authorList>
            <person name="Schweininger J."/>
            <person name="Scherer M."/>
            <person name="Rothemund F."/>
            <person name="Schilling E.M."/>
            <person name="Worz S."/>
            <person name="Stamminger T."/>
            <person name="Muller Y.A."/>
        </authorList>
    </citation>
    <scope>X-RAY CRYSTALLOGRAPHY (3.20 ANGSTROMS) OF 14-382</scope>
    <scope>FUNCTION</scope>
    <scope>INTERACTION WITH HOST PML</scope>
    <scope>SUBCELLULAR LOCATION</scope>
    <scope>SUBUNIT</scope>
</reference>
<proteinExistence type="evidence at protein level"/>
<organismHost>
    <name type="scientific">Homo sapiens</name>
    <name type="common">Human</name>
    <dbReference type="NCBI Taxonomy" id="9606"/>
</organismHost>
<comment type="function">
    <text evidence="2 4 6 7 9 12">Plays an important role in transactivating viral early genes as well as activating its own promoter, probably by altering the viral chromatin structure (By similarity). Expression of IE1 and IE2 proteins is critical for the establishment of lytic infection and reactivation from viral latency (PubMed:27466417). Disrupts PML-associated ND10 nuclear bodies by interfering with host PML and SP100 sumoylation thereby altering the regulation of type I and type II interferon-induced gene expression (PubMed:27903803, PubMed:34370791). Promotes efficient viral growth by interacting with and directing host SP100 to degradation, leading to enhanced acetylation level of histones (By similarity). In addition, functions in counteracting the host innate antiviral response. Inhibits the type I interferon pathway by directly interacting with and sequestrating host STAT2 (By similarity). Also targets type II interferon pathway by repressing IL6- and STAT3 target genes (By similarity). Repression of STAT3 genes is due to STAT3 nuclear accumulation and disruption of IL6-induced STAT3 phosphorylation by IE1 (PubMed:23903834). This repression is followed by phosphorylation and activation of STAT1 (By similarity). Inhibits host ISG transcription by sequestering host ISGF3 in a PML- and STAT2- binding dependent manner (By similarity). Alters host cell cycle progression, probably through its interaction with host E2F1 or RB1 that overcomes the RB1-mediated repression of E2F-responsive promoters (By similarity).</text>
</comment>
<comment type="subunit">
    <text evidence="2 7 9">Forms homodimers (PubMed:34370791). Interacts with human p53/TP53; this interaction inhibits p53/TP53-dependent transactivation activity. Interacts with host STAT1. Interacts with host STAT2; this interaction promotes viral growth and counteracts the antiviral interferon response. May also interact with the host STAT1-STAT2 heterodimer. Interacts with host STAT3; this interaction leads to STAT3 nuclear accumulation and disruption of IL6-induced STAT3 phosphorylation (By similarity). Interacts with host PML; this interaction inhibits host PML de novo sumoylation and probably inhibits PML regulation of type I and type II interferon-induced gene expression (PubMed:27903803, PubMed:34370791). Interacts with host DAXX. Interacts with host SP100. Interacts with host E2F1. Interacts with host RB1. Interacts with host HDAC1; this interaction inhibits histone deacetylation and promotes viral transcription. Interacts with host HDAC2; this interaction inhibits histone deacetylation and promotes viral transcription. Interacts with host HDAC3; this interaction inhibits histone deacetylation and promotes viral transcription (By similarity). Interacts with host PLSCR1; this interaction inhibits IE1 transactivating activity.</text>
</comment>
<comment type="subcellular location">
    <subcellularLocation>
        <location evidence="9">Host nucleus</location>
    </subcellularLocation>
    <text evidence="2">Colocalizes with host PML-associated nuclear bodies very early post infection.</text>
</comment>
<comment type="domain">
    <text evidence="2">The N-terminal region is required for nuclear targeting. The C-terminal 16-amino acid is termed the chromosome-tethering domain (CTD) and is required for the association of IE1, host PML and host STAT2 with the mitotic chromosomes. Targets host nucleosomes by directly binding to the acidic pocket of core histones.</text>
</comment>
<comment type="PTM">
    <text evidence="2 8">Sumoylated by host PML (PubMed:28250117). Sumoylation abolishes the interaction with host STAT2 and thus the IE1-mediated repression of interferon-stimulated genes (By similarity).</text>
</comment>
<comment type="similarity">
    <text evidence="11">Belongs to the HHV-5 IE1 protein family.</text>
</comment>
<gene>
    <name type="primary">UL123</name>
</gene>
<keyword id="KW-0002">3D-structure</keyword>
<keyword id="KW-0010">Activator</keyword>
<keyword id="KW-0244">Early protein</keyword>
<keyword id="KW-1078">G1/S host cell cycle checkpoint dysregulation by virus</keyword>
<keyword id="KW-1048">Host nucleus</keyword>
<keyword id="KW-0945">Host-virus interaction</keyword>
<keyword id="KW-1090">Inhibition of host innate immune response by virus</keyword>
<keyword id="KW-1114">Inhibition of host interferon signaling pathway by virus</keyword>
<keyword id="KW-0922">Interferon antiviral system evasion</keyword>
<keyword id="KW-1017">Isopeptide bond</keyword>
<keyword id="KW-1121">Modulation of host cell cycle by virus</keyword>
<keyword id="KW-1185">Reference proteome</keyword>
<keyword id="KW-0832">Ubl conjugation</keyword>
<keyword id="KW-0899">Viral immunoevasion</keyword>
<dbReference type="EMBL" id="X17403">
    <property type="protein sequence ID" value="CAA35325.1"/>
    <property type="molecule type" value="Genomic_DNA"/>
</dbReference>
<dbReference type="EMBL" id="M21295">
    <property type="protein sequence ID" value="AAA45980.1"/>
    <property type="molecule type" value="Genomic_DNA"/>
</dbReference>
<dbReference type="EMBL" id="BK000394">
    <property type="protein sequence ID" value="DAA00112.1"/>
    <property type="molecule type" value="Genomic_DNA"/>
</dbReference>
<dbReference type="PIR" id="S09890">
    <property type="entry name" value="EDBEM5"/>
</dbReference>
<dbReference type="PDB" id="6TGZ">
    <property type="method" value="X-ray"/>
    <property type="resolution" value="3.20 A"/>
    <property type="chains" value="F=14-382"/>
</dbReference>
<dbReference type="PDBsum" id="6TGZ"/>
<dbReference type="SMR" id="P13202"/>
<dbReference type="ELM" id="P13202"/>
<dbReference type="Proteomes" id="UP000008991">
    <property type="component" value="Segment"/>
</dbReference>
<dbReference type="Proteomes" id="UP000008992">
    <property type="component" value="Segment"/>
</dbReference>
<dbReference type="GO" id="GO:0042025">
    <property type="term" value="C:host cell nucleus"/>
    <property type="evidence" value="ECO:0007669"/>
    <property type="project" value="UniProtKB-SubCell"/>
</dbReference>
<dbReference type="GO" id="GO:0039686">
    <property type="term" value="P:bidirectional double-stranded viral DNA replication"/>
    <property type="evidence" value="ECO:0000314"/>
    <property type="project" value="UniProtKB"/>
</dbReference>
<dbReference type="GO" id="GO:0039695">
    <property type="term" value="P:DNA-templated viral transcription"/>
    <property type="evidence" value="ECO:0000250"/>
    <property type="project" value="UniProtKB"/>
</dbReference>
<dbReference type="GO" id="GO:0039645">
    <property type="term" value="P:symbiont-mediated perturbation of host cell cycle G1/S transition checkpoint"/>
    <property type="evidence" value="ECO:0007669"/>
    <property type="project" value="UniProtKB-KW"/>
</dbReference>
<dbReference type="GO" id="GO:0052170">
    <property type="term" value="P:symbiont-mediated suppression of host innate immune response"/>
    <property type="evidence" value="ECO:0007669"/>
    <property type="project" value="UniProtKB-KW"/>
</dbReference>
<dbReference type="GO" id="GO:0039502">
    <property type="term" value="P:symbiont-mediated suppression of host type I interferon-mediated signaling pathway"/>
    <property type="evidence" value="ECO:0007669"/>
    <property type="project" value="UniProtKB-KW"/>
</dbReference>
<dbReference type="InterPro" id="IPR010855">
    <property type="entry name" value="Cytomega_IE1/IE2"/>
</dbReference>
<dbReference type="Pfam" id="PF07340">
    <property type="entry name" value="Herpes_IE1"/>
    <property type="match status" value="1"/>
</dbReference>